<name>CYTL2_IXOPE</name>
<comment type="function">
    <text evidence="2">Inhibitor of cysteine proteinases (PubMed:31734217). Inhibits host cathepsin L (CTSL) and S (CTSS) (PubMed:31734217). Modulates production of various cytokines and chemokines in lipopolysaccharide (LPS)-stimulated mouse dendritic cell (PubMed:31734217). Suppresses maturation of mouse bone-marrow-derived dendritic cells (BMDCs) (PubMed:31734217).</text>
</comment>
<comment type="function">
    <text evidence="3">(Microbial infection) Modulates Borrelia miyamotoi-stimulated immune responses in mice by suppressing activities of host dendritic and T-cells.</text>
</comment>
<comment type="subcellular location">
    <subcellularLocation>
        <location evidence="6">Secreted</location>
    </subcellularLocation>
</comment>
<comment type="tissue specificity">
    <text evidence="2">Salivary gland, midgut and other tissues.</text>
</comment>
<comment type="developmental stage">
    <text evidence="2">Expressed in all life stages.</text>
</comment>
<comment type="induction">
    <text evidence="2">Blood feeding does not affect expression levels.</text>
</comment>
<comment type="similarity">
    <text evidence="6">Belongs to the cystatin family.</text>
</comment>
<feature type="signal peptide" evidence="1">
    <location>
        <begin position="1"/>
        <end position="18"/>
    </location>
</feature>
<feature type="chain" id="PRO_5022774448" description="Salivary cystatin-L2" evidence="1">
    <location>
        <begin position="19"/>
        <end position="133"/>
    </location>
</feature>
<feature type="domain" description="Cystatin" evidence="1">
    <location>
        <begin position="34"/>
        <end position="118"/>
    </location>
</feature>
<keyword id="KW-0646">Protease inhibitor</keyword>
<keyword id="KW-0964">Secreted</keyword>
<keyword id="KW-0732">Signal</keyword>
<keyword id="KW-0789">Thiol protease inhibitor</keyword>
<accession>A0A5C1J0Z8</accession>
<protein>
    <recommendedName>
        <fullName evidence="6">Salivary cystatin-L2</fullName>
    </recommendedName>
    <alternativeName>
        <fullName evidence="6">Secreted salivary protein sL2</fullName>
    </alternativeName>
    <alternativeName>
        <fullName evidence="4 5">Sialostatin L2</fullName>
        <shortName evidence="4 5">Ip-sL2</shortName>
    </alternativeName>
</protein>
<proteinExistence type="evidence at transcript level"/>
<sequence>MTSSLALVLLLGGAAVCAELTLRGGYRERSNHQDDPKYLELAHYATSTWSAQQPGKTHFDTVVEVLKVETQTVAGTNYRLTLKVAESTCELTSTYSKDTCQANANAAHRTCTAVIYENLQGEKSVSSFECAAA</sequence>
<organism evidence="7">
    <name type="scientific">Ixodes persulcatus</name>
    <name type="common">Taiga tick</name>
    <dbReference type="NCBI Taxonomy" id="34615"/>
    <lineage>
        <taxon>Eukaryota</taxon>
        <taxon>Metazoa</taxon>
        <taxon>Ecdysozoa</taxon>
        <taxon>Arthropoda</taxon>
        <taxon>Chelicerata</taxon>
        <taxon>Arachnida</taxon>
        <taxon>Acari</taxon>
        <taxon>Parasitiformes</taxon>
        <taxon>Ixodida</taxon>
        <taxon>Ixodoidea</taxon>
        <taxon>Ixodidae</taxon>
        <taxon>Ixodinae</taxon>
        <taxon>Ixodes</taxon>
    </lineage>
</organism>
<evidence type="ECO:0000255" key="1"/>
<evidence type="ECO:0000269" key="2">
    <source>
    </source>
</evidence>
<evidence type="ECO:0000269" key="3">
    <source>
    </source>
</evidence>
<evidence type="ECO:0000303" key="4">
    <source>
    </source>
</evidence>
<evidence type="ECO:0000303" key="5">
    <source>
    </source>
</evidence>
<evidence type="ECO:0000305" key="6"/>
<evidence type="ECO:0000312" key="7">
    <source>
        <dbReference type="EMBL" id="QEM25133.1"/>
    </source>
</evidence>
<dbReference type="EMBL" id="MK524726">
    <property type="protein sequence ID" value="QEM25133.1"/>
    <property type="molecule type" value="mRNA"/>
</dbReference>
<dbReference type="EnsemblMetazoa" id="GWHTAMMH022316.1">
    <property type="protein sequence ID" value="GWHPAMMH022316.1"/>
    <property type="gene ID" value="GWHGAMMH022316.1"/>
</dbReference>
<dbReference type="VEuPathDB" id="VectorBase:IPEI_018199"/>
<dbReference type="OMA" id="SKENCRP"/>
<dbReference type="OrthoDB" id="6481506at2759"/>
<dbReference type="GO" id="GO:0005737">
    <property type="term" value="C:cytoplasm"/>
    <property type="evidence" value="ECO:0007669"/>
    <property type="project" value="TreeGrafter"/>
</dbReference>
<dbReference type="GO" id="GO:0005615">
    <property type="term" value="C:extracellular space"/>
    <property type="evidence" value="ECO:0007669"/>
    <property type="project" value="TreeGrafter"/>
</dbReference>
<dbReference type="GO" id="GO:0031982">
    <property type="term" value="C:vesicle"/>
    <property type="evidence" value="ECO:0007669"/>
    <property type="project" value="TreeGrafter"/>
</dbReference>
<dbReference type="GO" id="GO:0004869">
    <property type="term" value="F:cysteine-type endopeptidase inhibitor activity"/>
    <property type="evidence" value="ECO:0007669"/>
    <property type="project" value="UniProtKB-KW"/>
</dbReference>
<dbReference type="CDD" id="cd00042">
    <property type="entry name" value="CY"/>
    <property type="match status" value="1"/>
</dbReference>
<dbReference type="Gene3D" id="3.10.450.10">
    <property type="match status" value="1"/>
</dbReference>
<dbReference type="InterPro" id="IPR000010">
    <property type="entry name" value="Cystatin_dom"/>
</dbReference>
<dbReference type="InterPro" id="IPR046350">
    <property type="entry name" value="Cystatin_sf"/>
</dbReference>
<dbReference type="InterPro" id="IPR018073">
    <property type="entry name" value="Prot_inh_cystat_CS"/>
</dbReference>
<dbReference type="PANTHER" id="PTHR46186">
    <property type="entry name" value="CYSTATIN"/>
    <property type="match status" value="1"/>
</dbReference>
<dbReference type="PANTHER" id="PTHR46186:SF2">
    <property type="entry name" value="CYSTATIN"/>
    <property type="match status" value="1"/>
</dbReference>
<dbReference type="Pfam" id="PF00031">
    <property type="entry name" value="Cystatin"/>
    <property type="match status" value="1"/>
</dbReference>
<dbReference type="SMART" id="SM00043">
    <property type="entry name" value="CY"/>
    <property type="match status" value="1"/>
</dbReference>
<dbReference type="SUPFAM" id="SSF54403">
    <property type="entry name" value="Cystatin/monellin"/>
    <property type="match status" value="1"/>
</dbReference>
<dbReference type="PROSITE" id="PS00287">
    <property type="entry name" value="CYSTATIN"/>
    <property type="match status" value="1"/>
</dbReference>
<reference evidence="7" key="1">
    <citation type="submission" date="2019-02" db="EMBL/GenBank/DDBJ databases">
        <title>Identification and functional analysis of immunosuppressant molecules, sialostatin L and L2, in the Ixodes persulcatus Schulze.</title>
        <authorList>
            <person name="Sajiki Y."/>
            <person name="Konnai S."/>
            <person name="Ochi A."/>
            <person name="Takada H."/>
            <person name="Okagawa T."/>
            <person name="Githaka N."/>
            <person name="Isezaki M."/>
            <person name="Yamada S."/>
            <person name="Ito T."/>
            <person name="Takano A."/>
            <person name="Ando S."/>
            <person name="Kawabata H."/>
            <person name="Murata S."/>
            <person name="Ohashi K."/>
        </authorList>
    </citation>
    <scope>NUCLEOTIDE SEQUENCE [MRNA]</scope>
    <source>
        <strain evidence="7">Hokudai</strain>
        <tissue evidence="7">Salivary gland</tissue>
    </source>
</reference>
<reference evidence="6" key="2">
    <citation type="journal article" date="2020" name="Ticks Tick Borne Dis.">
        <title>Immunosuppressive effects of sialostatin L1 and L2 isolated from the taiga tick Ixodes persulcatus Schulze.</title>
        <authorList>
            <person name="Sajiki Y."/>
            <person name="Konnai S."/>
            <person name="Ochi A."/>
            <person name="Okagawa T."/>
            <person name="Githaka N."/>
            <person name="Isezaki M."/>
            <person name="Yamada S."/>
            <person name="Ito T."/>
            <person name="Ando S."/>
            <person name="Kawabata H."/>
            <person name="Logullo C."/>
            <person name="da Silva Vaz I. Jr."/>
            <person name="Maekawa N."/>
            <person name="Murata S."/>
            <person name="Ohashi K."/>
        </authorList>
    </citation>
    <scope>FUNCTION</scope>
    <scope>TISSUE SPECIFICITY</scope>
    <scope>DEVELOPMENTAL STAGE</scope>
    <scope>INDUCTION</scope>
</reference>
<reference evidence="6" key="3">
    <citation type="journal article" date="2022" name="Ticks Tick Borne Dis.">
        <title>Suppressive effects of Ixodes persulcatus sialostatin L2 against Borrelia miyamotoi-stimulated immunity.</title>
        <authorList>
            <person name="Sajiki Y."/>
            <person name="Konnai S."/>
            <person name="Okagawa T."/>
            <person name="Maekawa N."/>
            <person name="Isezaki M."/>
            <person name="Yamada S."/>
            <person name="Ito T."/>
            <person name="Sato K."/>
            <person name="Kawabata H."/>
            <person name="Logullo C."/>
            <person name="Jr I.D.S.V."/>
            <person name="Murata S."/>
            <person name="Ohashi K."/>
        </authorList>
    </citation>
    <scope>FUNCTION (MICROBIAL INFECTION)</scope>
</reference>